<name>LCMT1_HUMAN</name>
<feature type="chain" id="PRO_0000204422" description="Leucine carboxyl methyltransferase 1">
    <location>
        <begin position="1"/>
        <end position="334"/>
    </location>
</feature>
<feature type="binding site" evidence="2 7">
    <location>
        <position position="37"/>
    </location>
    <ligand>
        <name>S-adenosyl-L-methionine</name>
        <dbReference type="ChEBI" id="CHEBI:59789"/>
    </ligand>
</feature>
<feature type="binding site" evidence="2 7">
    <location>
        <position position="73"/>
    </location>
    <ligand>
        <name>S-adenosyl-L-methionine</name>
        <dbReference type="ChEBI" id="CHEBI:59789"/>
    </ligand>
</feature>
<feature type="binding site" evidence="2 7">
    <location>
        <position position="98"/>
    </location>
    <ligand>
        <name>S-adenosyl-L-methionine</name>
        <dbReference type="ChEBI" id="CHEBI:59789"/>
    </ligand>
</feature>
<feature type="binding site" evidence="2 7">
    <location>
        <position position="122"/>
    </location>
    <ligand>
        <name>S-adenosyl-L-methionine</name>
        <dbReference type="ChEBI" id="CHEBI:59789"/>
    </ligand>
</feature>
<feature type="binding site" evidence="2 7">
    <location>
        <begin position="171"/>
        <end position="172"/>
    </location>
    <ligand>
        <name>S-adenosyl-L-methionine</name>
        <dbReference type="ChEBI" id="CHEBI:59789"/>
    </ligand>
</feature>
<feature type="binding site" evidence="2 7">
    <location>
        <position position="198"/>
    </location>
    <ligand>
        <name>S-adenosyl-L-methionine</name>
        <dbReference type="ChEBI" id="CHEBI:59789"/>
    </ligand>
</feature>
<feature type="splice variant" id="VSP_017428" description="In isoform 2." evidence="3 4 5">
    <original>MATRQRESSITSCCSTSSCDADDEGVRGTCEDASLCK</original>
    <variation>MLPCARELPSAAPDSTLLLTAQHWVANLFILATLIGWTVRSFFLGRMETCCSHLGLRSGR</variation>
    <location>
        <begin position="1"/>
        <end position="37"/>
    </location>
</feature>
<feature type="splice variant" id="VSP_041416" description="In isoform 3." evidence="6">
    <location>
        <begin position="136"/>
        <end position="190"/>
    </location>
</feature>
<feature type="sequence conflict" description="In Ref. 4; BAD97084." evidence="6" ref="4">
    <original>P</original>
    <variation>S</variation>
    <location>
        <position position="49"/>
    </location>
</feature>
<feature type="sequence conflict" description="In Ref. 3; BAB15270." evidence="6" ref="3">
    <original>L</original>
    <variation>P</variation>
    <location>
        <position position="114"/>
    </location>
</feature>
<feature type="sequence conflict" description="In Ref. 2; AAD34063." evidence="6" ref="2">
    <original>RQ</original>
    <variation>PS</variation>
    <location>
        <begin position="248"/>
        <end position="249"/>
    </location>
</feature>
<feature type="sequence conflict" description="In Ref. 1; AAF18267." evidence="6" ref="1">
    <original>D</original>
    <variation>E</variation>
    <location>
        <position position="251"/>
    </location>
</feature>
<feature type="sequence conflict" description="In Ref. 3; BAB15270." evidence="6" ref="3">
    <original>F</original>
    <variation>L</variation>
    <location>
        <position position="301"/>
    </location>
</feature>
<feature type="sequence conflict" description="In Ref. 1; AAF18267." evidence="6" ref="1">
    <original>EL</original>
    <variation>DV</variation>
    <location>
        <begin position="306"/>
        <end position="307"/>
    </location>
</feature>
<feature type="sequence conflict" description="In Ref. 1; AAF18267." evidence="6" ref="1">
    <original>MR</original>
    <variation>NA</variation>
    <location>
        <begin position="312"/>
        <end position="313"/>
    </location>
</feature>
<feature type="helix" evidence="8">
    <location>
        <begin position="28"/>
        <end position="43"/>
    </location>
</feature>
<feature type="helix" evidence="8">
    <location>
        <begin position="51"/>
        <end position="53"/>
    </location>
</feature>
<feature type="helix" evidence="8">
    <location>
        <begin position="64"/>
        <end position="87"/>
    </location>
</feature>
<feature type="turn" evidence="8">
    <location>
        <begin position="88"/>
        <end position="90"/>
    </location>
</feature>
<feature type="strand" evidence="8">
    <location>
        <begin position="92"/>
        <end position="97"/>
    </location>
</feature>
<feature type="helix" evidence="8">
    <location>
        <begin position="104"/>
        <end position="110"/>
    </location>
</feature>
<feature type="strand" evidence="8">
    <location>
        <begin position="116"/>
        <end position="122"/>
    </location>
</feature>
<feature type="helix" evidence="8">
    <location>
        <begin position="124"/>
        <end position="136"/>
    </location>
</feature>
<feature type="helix" evidence="8">
    <location>
        <begin position="138"/>
        <end position="147"/>
    </location>
</feature>
<feature type="strand" evidence="8">
    <location>
        <begin position="148"/>
        <end position="152"/>
    </location>
</feature>
<feature type="strand" evidence="8">
    <location>
        <begin position="159"/>
        <end position="161"/>
    </location>
</feature>
<feature type="strand" evidence="8">
    <location>
        <begin position="163"/>
        <end position="169"/>
    </location>
</feature>
<feature type="helix" evidence="8">
    <location>
        <begin position="175"/>
        <end position="184"/>
    </location>
</feature>
<feature type="strand" evidence="8">
    <location>
        <begin position="193"/>
        <end position="199"/>
    </location>
</feature>
<feature type="helix" evidence="8">
    <location>
        <begin position="201"/>
        <end position="203"/>
    </location>
</feature>
<feature type="helix" evidence="8">
    <location>
        <begin position="206"/>
        <end position="219"/>
    </location>
</feature>
<feature type="strand" evidence="8">
    <location>
        <begin position="221"/>
        <end position="230"/>
    </location>
</feature>
<feature type="helix" evidence="8">
    <location>
        <begin position="236"/>
        <end position="246"/>
    </location>
</feature>
<feature type="turn" evidence="8">
    <location>
        <begin position="247"/>
        <end position="249"/>
    </location>
</feature>
<feature type="helix" evidence="8">
    <location>
        <begin position="255"/>
        <end position="259"/>
    </location>
</feature>
<feature type="helix" evidence="8">
    <location>
        <begin position="261"/>
        <end position="269"/>
    </location>
</feature>
<feature type="turn" evidence="8">
    <location>
        <begin position="270"/>
        <end position="272"/>
    </location>
</feature>
<feature type="strand" evidence="8">
    <location>
        <begin position="274"/>
        <end position="280"/>
    </location>
</feature>
<feature type="helix" evidence="8">
    <location>
        <begin position="281"/>
        <end position="286"/>
    </location>
</feature>
<feature type="helix" evidence="8">
    <location>
        <begin position="290"/>
        <end position="299"/>
    </location>
</feature>
<feature type="helix" evidence="8">
    <location>
        <begin position="305"/>
        <end position="312"/>
    </location>
</feature>
<feature type="strand" evidence="8">
    <location>
        <begin position="315"/>
        <end position="323"/>
    </location>
</feature>
<feature type="turn" evidence="8">
    <location>
        <begin position="325"/>
        <end position="328"/>
    </location>
</feature>
<feature type="helix" evidence="8">
    <location>
        <begin position="329"/>
        <end position="331"/>
    </location>
</feature>
<keyword id="KW-0002">3D-structure</keyword>
<keyword id="KW-0025">Alternative splicing</keyword>
<keyword id="KW-0489">Methyltransferase</keyword>
<keyword id="KW-1267">Proteomics identification</keyword>
<keyword id="KW-1185">Reference proteome</keyword>
<keyword id="KW-0949">S-adenosyl-L-methionine</keyword>
<keyword id="KW-0808">Transferase</keyword>
<sequence length="334" mass="38379">MATRQRESSITSCCSTSSCDADDEGVRGTCEDASLCKRFAVSIGYWHDPYIQHFVRLSKERKAPEINRGYFARVHGVSQLIKAFLRKTECHCQIVNLGAGMDTTFWRLKDEDLLPSKYFEVDFPMIVTRKLHSIKCKPPLSSPILELHSEDTLQMDGHILDSKRYAVIGADLRDLSELEEKLKKCNMNTQLPTLLIAECVLVYMTPEQSANLLKWAANSFERAMFINYEQVNMGDRFGQIMIENLRRRQCDLAGVETCKSLESQKERLLSNGWETASAVDMMELYNRLPRAEVSRIESLEFLDEMELLEQLMRHYCLCWATKGGNELGLKEITY</sequence>
<dbReference type="EC" id="2.1.1.233" evidence="1 2"/>
<dbReference type="EMBL" id="AF037601">
    <property type="protein sequence ID" value="AAF18267.1"/>
    <property type="molecule type" value="mRNA"/>
</dbReference>
<dbReference type="EMBL" id="AF151826">
    <property type="protein sequence ID" value="AAD34063.1"/>
    <property type="molecule type" value="mRNA"/>
</dbReference>
<dbReference type="EMBL" id="AK025884">
    <property type="protein sequence ID" value="BAB15270.1"/>
    <property type="molecule type" value="mRNA"/>
</dbReference>
<dbReference type="EMBL" id="AK223364">
    <property type="protein sequence ID" value="BAD97084.1"/>
    <property type="molecule type" value="mRNA"/>
</dbReference>
<dbReference type="EMBL" id="AK291885">
    <property type="protein sequence ID" value="BAF84574.1"/>
    <property type="molecule type" value="mRNA"/>
</dbReference>
<dbReference type="EMBL" id="AK314409">
    <property type="protein sequence ID" value="BAG37031.1"/>
    <property type="molecule type" value="mRNA"/>
</dbReference>
<dbReference type="EMBL" id="AC008741">
    <property type="status" value="NOT_ANNOTATED_CDS"/>
    <property type="molecule type" value="Genomic_DNA"/>
</dbReference>
<dbReference type="EMBL" id="AC133552">
    <property type="status" value="NOT_ANNOTATED_CDS"/>
    <property type="molecule type" value="Genomic_DNA"/>
</dbReference>
<dbReference type="EMBL" id="BC001214">
    <property type="protein sequence ID" value="AAH01214.1"/>
    <property type="molecule type" value="mRNA"/>
</dbReference>
<dbReference type="EMBL" id="BC014217">
    <property type="protein sequence ID" value="AAH14217.1"/>
    <property type="molecule type" value="mRNA"/>
</dbReference>
<dbReference type="EMBL" id="AL137283">
    <property type="protein sequence ID" value="CAB70677.1"/>
    <property type="molecule type" value="mRNA"/>
</dbReference>
<dbReference type="CCDS" id="CCDS45445.1">
    <molecule id="Q9UIC8-1"/>
</dbReference>
<dbReference type="CCDS" id="CCDS45446.1">
    <molecule id="Q9UIC8-3"/>
</dbReference>
<dbReference type="PIR" id="T46352">
    <property type="entry name" value="T46352"/>
</dbReference>
<dbReference type="RefSeq" id="NP_001027563.1">
    <molecule id="Q9UIC8-3"/>
    <property type="nucleotide sequence ID" value="NM_001032391.2"/>
</dbReference>
<dbReference type="RefSeq" id="NP_057393.2">
    <molecule id="Q9UIC8-1"/>
    <property type="nucleotide sequence ID" value="NM_016309.3"/>
</dbReference>
<dbReference type="RefSeq" id="XP_011544166.1">
    <molecule id="Q9UIC8-2"/>
    <property type="nucleotide sequence ID" value="XM_011545864.2"/>
</dbReference>
<dbReference type="RefSeq" id="XP_054236414.1">
    <molecule id="Q9UIC8-2"/>
    <property type="nucleotide sequence ID" value="XM_054380439.1"/>
</dbReference>
<dbReference type="PDB" id="3IEI">
    <property type="method" value="X-ray"/>
    <property type="resolution" value="1.90 A"/>
    <property type="chains" value="A/B/C/D/E/F/G/H=1-334"/>
</dbReference>
<dbReference type="PDB" id="3O7W">
    <property type="method" value="X-ray"/>
    <property type="resolution" value="2.00 A"/>
    <property type="chains" value="A=23-232, A=259-334"/>
</dbReference>
<dbReference type="PDB" id="3P71">
    <property type="method" value="X-ray"/>
    <property type="resolution" value="2.70 A"/>
    <property type="chains" value="T=1-334"/>
</dbReference>
<dbReference type="PDBsum" id="3IEI"/>
<dbReference type="PDBsum" id="3O7W"/>
<dbReference type="PDBsum" id="3P71"/>
<dbReference type="SMR" id="Q9UIC8"/>
<dbReference type="BioGRID" id="119549">
    <property type="interactions" value="34"/>
</dbReference>
<dbReference type="FunCoup" id="Q9UIC8">
    <property type="interactions" value="2857"/>
</dbReference>
<dbReference type="IntAct" id="Q9UIC8">
    <property type="interactions" value="10"/>
</dbReference>
<dbReference type="MINT" id="Q9UIC8"/>
<dbReference type="STRING" id="9606.ENSP00000382021"/>
<dbReference type="DrugBank" id="DB00149">
    <property type="generic name" value="Leucine"/>
</dbReference>
<dbReference type="iPTMnet" id="Q9UIC8"/>
<dbReference type="MetOSite" id="Q9UIC8"/>
<dbReference type="PhosphoSitePlus" id="Q9UIC8"/>
<dbReference type="BioMuta" id="LCMT1"/>
<dbReference type="DMDM" id="12643251"/>
<dbReference type="jPOST" id="Q9UIC8"/>
<dbReference type="MassIVE" id="Q9UIC8"/>
<dbReference type="PaxDb" id="9606-ENSP00000382021"/>
<dbReference type="PeptideAtlas" id="Q9UIC8"/>
<dbReference type="ProteomicsDB" id="84491">
    <molecule id="Q9UIC8-1"/>
</dbReference>
<dbReference type="ProteomicsDB" id="84492">
    <molecule id="Q9UIC8-2"/>
</dbReference>
<dbReference type="ProteomicsDB" id="84493">
    <molecule id="Q9UIC8-3"/>
</dbReference>
<dbReference type="Pumba" id="Q9UIC8"/>
<dbReference type="Antibodypedia" id="26192">
    <property type="antibodies" value="275 antibodies from 21 providers"/>
</dbReference>
<dbReference type="DNASU" id="51451"/>
<dbReference type="Ensembl" id="ENST00000380966.8">
    <molecule id="Q9UIC8-3"/>
    <property type="protein sequence ID" value="ENSP00000370353.4"/>
    <property type="gene ID" value="ENSG00000205629.12"/>
</dbReference>
<dbReference type="Ensembl" id="ENST00000399069.8">
    <molecule id="Q9UIC8-1"/>
    <property type="protein sequence ID" value="ENSP00000382021.3"/>
    <property type="gene ID" value="ENSG00000205629.12"/>
</dbReference>
<dbReference type="GeneID" id="51451"/>
<dbReference type="KEGG" id="hsa:51451"/>
<dbReference type="MANE-Select" id="ENST00000399069.8">
    <property type="protein sequence ID" value="ENSP00000382021.3"/>
    <property type="RefSeq nucleotide sequence ID" value="NM_016309.3"/>
    <property type="RefSeq protein sequence ID" value="NP_057393.2"/>
</dbReference>
<dbReference type="UCSC" id="uc002dnx.2">
    <molecule id="Q9UIC8-1"/>
    <property type="organism name" value="human"/>
</dbReference>
<dbReference type="AGR" id="HGNC:17557"/>
<dbReference type="CTD" id="51451"/>
<dbReference type="DisGeNET" id="51451"/>
<dbReference type="GeneCards" id="LCMT1"/>
<dbReference type="HGNC" id="HGNC:17557">
    <property type="gene designation" value="LCMT1"/>
</dbReference>
<dbReference type="HPA" id="ENSG00000205629">
    <property type="expression patterns" value="Low tissue specificity"/>
</dbReference>
<dbReference type="MIM" id="610286">
    <property type="type" value="gene"/>
</dbReference>
<dbReference type="neXtProt" id="NX_Q9UIC8"/>
<dbReference type="OpenTargets" id="ENSG00000205629"/>
<dbReference type="PharmGKB" id="PA134928443"/>
<dbReference type="VEuPathDB" id="HostDB:ENSG00000205629"/>
<dbReference type="eggNOG" id="KOG2918">
    <property type="taxonomic scope" value="Eukaryota"/>
</dbReference>
<dbReference type="GeneTree" id="ENSGT00940000156372"/>
<dbReference type="HOGENOM" id="CLU_031312_0_0_1"/>
<dbReference type="InParanoid" id="Q9UIC8"/>
<dbReference type="OMA" id="IIYEPIR"/>
<dbReference type="OrthoDB" id="203237at2759"/>
<dbReference type="PAN-GO" id="Q9UIC8">
    <property type="GO annotations" value="3 GO annotations based on evolutionary models"/>
</dbReference>
<dbReference type="PhylomeDB" id="Q9UIC8"/>
<dbReference type="TreeFam" id="TF315087"/>
<dbReference type="BioCyc" id="MetaCyc:MONOMER-16510"/>
<dbReference type="BRENDA" id="2.1.1.233">
    <property type="organism ID" value="2681"/>
</dbReference>
<dbReference type="PathwayCommons" id="Q9UIC8"/>
<dbReference type="Reactome" id="R-HSA-69273">
    <property type="pathway name" value="Cyclin A/B1/B2 associated events during G2/M transition"/>
</dbReference>
<dbReference type="SABIO-RK" id="Q9UIC8"/>
<dbReference type="SignaLink" id="Q9UIC8"/>
<dbReference type="SIGNOR" id="Q9UIC8"/>
<dbReference type="BioGRID-ORCS" id="51451">
    <property type="hits" value="255 hits in 1171 CRISPR screens"/>
</dbReference>
<dbReference type="ChiTaRS" id="LCMT1">
    <property type="organism name" value="human"/>
</dbReference>
<dbReference type="EvolutionaryTrace" id="Q9UIC8"/>
<dbReference type="GeneWiki" id="Leucine_carboxyl_methyltransferase_1"/>
<dbReference type="GenomeRNAi" id="51451"/>
<dbReference type="Pharos" id="Q9UIC8">
    <property type="development level" value="Tbio"/>
</dbReference>
<dbReference type="PRO" id="PR:Q9UIC8"/>
<dbReference type="Proteomes" id="UP000005640">
    <property type="component" value="Chromosome 16"/>
</dbReference>
<dbReference type="RNAct" id="Q9UIC8">
    <property type="molecule type" value="protein"/>
</dbReference>
<dbReference type="Bgee" id="ENSG00000205629">
    <property type="expression patterns" value="Expressed in middle temporal gyrus and 204 other cell types or tissues"/>
</dbReference>
<dbReference type="ExpressionAtlas" id="Q9UIC8">
    <property type="expression patterns" value="baseline and differential"/>
</dbReference>
<dbReference type="GO" id="GO:0005829">
    <property type="term" value="C:cytosol"/>
    <property type="evidence" value="ECO:0000318"/>
    <property type="project" value="GO_Central"/>
</dbReference>
<dbReference type="GO" id="GO:0005654">
    <property type="term" value="C:nucleoplasm"/>
    <property type="evidence" value="ECO:0000304"/>
    <property type="project" value="Reactome"/>
</dbReference>
<dbReference type="GO" id="GO:0003880">
    <property type="term" value="F:protein C-terminal carboxyl O-methyltransferase activity"/>
    <property type="evidence" value="ECO:0000314"/>
    <property type="project" value="MGI"/>
</dbReference>
<dbReference type="GO" id="GO:0018423">
    <property type="term" value="F:protein C-terminal leucine carboxyl O-methyltransferase activity"/>
    <property type="evidence" value="ECO:0000318"/>
    <property type="project" value="GO_Central"/>
</dbReference>
<dbReference type="GO" id="GO:0008757">
    <property type="term" value="F:S-adenosylmethionine-dependent methyltransferase activity"/>
    <property type="evidence" value="ECO:0000304"/>
    <property type="project" value="ProtInc"/>
</dbReference>
<dbReference type="GO" id="GO:0006481">
    <property type="term" value="P:C-terminal protein methylation"/>
    <property type="evidence" value="ECO:0000314"/>
    <property type="project" value="MGI"/>
</dbReference>
<dbReference type="GO" id="GO:0000086">
    <property type="term" value="P:G2/M transition of mitotic cell cycle"/>
    <property type="evidence" value="ECO:0000304"/>
    <property type="project" value="Reactome"/>
</dbReference>
<dbReference type="GO" id="GO:0031333">
    <property type="term" value="P:negative regulation of protein-containing complex assembly"/>
    <property type="evidence" value="ECO:0000315"/>
    <property type="project" value="MGI"/>
</dbReference>
<dbReference type="GO" id="GO:0006479">
    <property type="term" value="P:protein methylation"/>
    <property type="evidence" value="ECO:0000315"/>
    <property type="project" value="MGI"/>
</dbReference>
<dbReference type="GO" id="GO:0036211">
    <property type="term" value="P:protein modification process"/>
    <property type="evidence" value="ECO:0000304"/>
    <property type="project" value="ProtInc"/>
</dbReference>
<dbReference type="GO" id="GO:0042981">
    <property type="term" value="P:regulation of apoptotic process"/>
    <property type="evidence" value="ECO:0000315"/>
    <property type="project" value="MGI"/>
</dbReference>
<dbReference type="GO" id="GO:0010906">
    <property type="term" value="P:regulation of glucose metabolic process"/>
    <property type="evidence" value="ECO:0007669"/>
    <property type="project" value="Ensembl"/>
</dbReference>
<dbReference type="GO" id="GO:0090266">
    <property type="term" value="P:regulation of mitotic cell cycle spindle assembly checkpoint"/>
    <property type="evidence" value="ECO:0000315"/>
    <property type="project" value="MGI"/>
</dbReference>
<dbReference type="FunFam" id="3.40.50.150:FF:000092">
    <property type="entry name" value="Leucine carboxyl methyltransferase 1"/>
    <property type="match status" value="1"/>
</dbReference>
<dbReference type="Gene3D" id="3.40.50.150">
    <property type="entry name" value="Vaccinia Virus protein VP39"/>
    <property type="match status" value="1"/>
</dbReference>
<dbReference type="InterPro" id="IPR016651">
    <property type="entry name" value="LCMT1"/>
</dbReference>
<dbReference type="InterPro" id="IPR007213">
    <property type="entry name" value="Ppm1/Ppm2/Tcmp"/>
</dbReference>
<dbReference type="InterPro" id="IPR029063">
    <property type="entry name" value="SAM-dependent_MTases_sf"/>
</dbReference>
<dbReference type="PANTHER" id="PTHR13600">
    <property type="entry name" value="LEUCINE CARBOXYL METHYLTRANSFERASE"/>
    <property type="match status" value="1"/>
</dbReference>
<dbReference type="PANTHER" id="PTHR13600:SF33">
    <property type="entry name" value="LEUCINE CARBOXYL METHYLTRANSFERASE 1"/>
    <property type="match status" value="1"/>
</dbReference>
<dbReference type="Pfam" id="PF04072">
    <property type="entry name" value="LCM"/>
    <property type="match status" value="1"/>
</dbReference>
<dbReference type="PIRSF" id="PIRSF016305">
    <property type="entry name" value="LCM_mtfrase"/>
    <property type="match status" value="1"/>
</dbReference>
<dbReference type="SUPFAM" id="SSF53335">
    <property type="entry name" value="S-adenosyl-L-methionine-dependent methyltransferases"/>
    <property type="match status" value="1"/>
</dbReference>
<organism>
    <name type="scientific">Homo sapiens</name>
    <name type="common">Human</name>
    <dbReference type="NCBI Taxonomy" id="9606"/>
    <lineage>
        <taxon>Eukaryota</taxon>
        <taxon>Metazoa</taxon>
        <taxon>Chordata</taxon>
        <taxon>Craniata</taxon>
        <taxon>Vertebrata</taxon>
        <taxon>Euteleostomi</taxon>
        <taxon>Mammalia</taxon>
        <taxon>Eutheria</taxon>
        <taxon>Euarchontoglires</taxon>
        <taxon>Primates</taxon>
        <taxon>Haplorrhini</taxon>
        <taxon>Catarrhini</taxon>
        <taxon>Hominidae</taxon>
        <taxon>Homo</taxon>
    </lineage>
</organism>
<comment type="function">
    <text evidence="1">Methylates the carboxyl group of the C-terminal leucine residue of protein phosphatase 2A catalytic subunits to form alpha-leucine ester residues.</text>
</comment>
<comment type="catalytic activity">
    <reaction evidence="1 2">
        <text>[phosphatase 2A protein]-C-terminal L-leucine + S-adenosyl-L-methionine = [phosphatase 2A protein]-C-terminal L-leucine methyl ester + S-adenosyl-L-homocysteine</text>
        <dbReference type="Rhea" id="RHEA:48544"/>
        <dbReference type="Rhea" id="RHEA-COMP:12134"/>
        <dbReference type="Rhea" id="RHEA-COMP:12135"/>
        <dbReference type="ChEBI" id="CHEBI:57856"/>
        <dbReference type="ChEBI" id="CHEBI:59789"/>
        <dbReference type="ChEBI" id="CHEBI:90516"/>
        <dbReference type="ChEBI" id="CHEBI:90517"/>
        <dbReference type="EC" id="2.1.1.233"/>
    </reaction>
</comment>
<comment type="biophysicochemical properties">
    <kinetics>
        <KM evidence="1">0.1 uM for PP2AD</KM>
        <KM evidence="1">1.3 uM for AdoMet</KM>
    </kinetics>
</comment>
<comment type="interaction">
    <interactant intactId="EBI-747632">
        <id>Q9UIC8</id>
    </interactant>
    <interactant intactId="EBI-740459">
        <id>P51116</id>
        <label>FXR2</label>
    </interactant>
    <organismsDiffer>false</organismsDiffer>
    <experiments>2</experiments>
</comment>
<comment type="alternative products">
    <event type="alternative splicing"/>
    <isoform>
        <id>Q9UIC8-1</id>
        <name>1</name>
        <sequence type="displayed"/>
    </isoform>
    <isoform>
        <id>Q9UIC8-2</id>
        <name>2</name>
        <sequence type="described" ref="VSP_017428"/>
    </isoform>
    <isoform>
        <id>Q9UIC8-3</id>
        <name>3</name>
        <sequence type="described" ref="VSP_041416"/>
    </isoform>
</comment>
<comment type="similarity">
    <text evidence="6">Belongs to the methyltransferase superfamily. LCMT family.</text>
</comment>
<accession>Q9UIC8</accession>
<accession>A6NL89</accession>
<accession>A8K770</accession>
<accession>Q53FC5</accession>
<accession>Q96CI5</accession>
<accession>Q9H6I9</accession>
<accession>Q9NTG4</accession>
<accession>Q9Y378</accession>
<evidence type="ECO:0000269" key="1">
    <source>
    </source>
</evidence>
<evidence type="ECO:0000269" key="2">
    <source>
    </source>
</evidence>
<evidence type="ECO:0000303" key="3">
    <source>
    </source>
</evidence>
<evidence type="ECO:0000303" key="4">
    <source>
    </source>
</evidence>
<evidence type="ECO:0000303" key="5">
    <source ref="4"/>
</evidence>
<evidence type="ECO:0000305" key="6"/>
<evidence type="ECO:0007744" key="7">
    <source>
        <dbReference type="PDB" id="3O7W"/>
    </source>
</evidence>
<evidence type="ECO:0007829" key="8">
    <source>
        <dbReference type="PDB" id="3IEI"/>
    </source>
</evidence>
<proteinExistence type="evidence at protein level"/>
<reference key="1">
    <citation type="journal article" date="1999" name="Biochemistry">
        <title>Purification of porcine brain protein phosphatase 2A leucine carboxyl methyltransferase and cloning of the human homologue.</title>
        <authorList>
            <person name="De Baere I."/>
            <person name="Derua R."/>
            <person name="Janssens V."/>
            <person name="Van Hoof C."/>
            <person name="Waelkens E."/>
            <person name="Merlevede W."/>
            <person name="Goris J."/>
        </authorList>
    </citation>
    <scope>NUCLEOTIDE SEQUENCE [MRNA] (ISOFORM 1)</scope>
    <scope>FUNCTION</scope>
    <scope>CATALYTIC ACTIVITY</scope>
    <scope>BIOPHYSICOCHEMICAL PROPERTIES</scope>
</reference>
<reference key="2">
    <citation type="journal article" date="2000" name="Genome Res.">
        <title>Identification of novel human genes evolutionarily conserved in Caenorhabditis elegans by comparative proteomics.</title>
        <authorList>
            <person name="Lai C.-H."/>
            <person name="Chou C.-Y."/>
            <person name="Ch'ang L.-Y."/>
            <person name="Liu C.-S."/>
            <person name="Lin W.-C."/>
        </authorList>
    </citation>
    <scope>NUCLEOTIDE SEQUENCE [LARGE SCALE MRNA] (ISOFORM 1)</scope>
</reference>
<reference key="3">
    <citation type="journal article" date="2004" name="Nat. Genet.">
        <title>Complete sequencing and characterization of 21,243 full-length human cDNAs.</title>
        <authorList>
            <person name="Ota T."/>
            <person name="Suzuki Y."/>
            <person name="Nishikawa T."/>
            <person name="Otsuki T."/>
            <person name="Sugiyama T."/>
            <person name="Irie R."/>
            <person name="Wakamatsu A."/>
            <person name="Hayashi K."/>
            <person name="Sato H."/>
            <person name="Nagai K."/>
            <person name="Kimura K."/>
            <person name="Makita H."/>
            <person name="Sekine M."/>
            <person name="Obayashi M."/>
            <person name="Nishi T."/>
            <person name="Shibahara T."/>
            <person name="Tanaka T."/>
            <person name="Ishii S."/>
            <person name="Yamamoto J."/>
            <person name="Saito K."/>
            <person name="Kawai Y."/>
            <person name="Isono Y."/>
            <person name="Nakamura Y."/>
            <person name="Nagahari K."/>
            <person name="Murakami K."/>
            <person name="Yasuda T."/>
            <person name="Iwayanagi T."/>
            <person name="Wagatsuma M."/>
            <person name="Shiratori A."/>
            <person name="Sudo H."/>
            <person name="Hosoiri T."/>
            <person name="Kaku Y."/>
            <person name="Kodaira H."/>
            <person name="Kondo H."/>
            <person name="Sugawara M."/>
            <person name="Takahashi M."/>
            <person name="Kanda K."/>
            <person name="Yokoi T."/>
            <person name="Furuya T."/>
            <person name="Kikkawa E."/>
            <person name="Omura Y."/>
            <person name="Abe K."/>
            <person name="Kamihara K."/>
            <person name="Katsuta N."/>
            <person name="Sato K."/>
            <person name="Tanikawa M."/>
            <person name="Yamazaki M."/>
            <person name="Ninomiya K."/>
            <person name="Ishibashi T."/>
            <person name="Yamashita H."/>
            <person name="Murakawa K."/>
            <person name="Fujimori K."/>
            <person name="Tanai H."/>
            <person name="Kimata M."/>
            <person name="Watanabe M."/>
            <person name="Hiraoka S."/>
            <person name="Chiba Y."/>
            <person name="Ishida S."/>
            <person name="Ono Y."/>
            <person name="Takiguchi S."/>
            <person name="Watanabe S."/>
            <person name="Yosida M."/>
            <person name="Hotuta T."/>
            <person name="Kusano J."/>
            <person name="Kanehori K."/>
            <person name="Takahashi-Fujii A."/>
            <person name="Hara H."/>
            <person name="Tanase T.-O."/>
            <person name="Nomura Y."/>
            <person name="Togiya S."/>
            <person name="Komai F."/>
            <person name="Hara R."/>
            <person name="Takeuchi K."/>
            <person name="Arita M."/>
            <person name="Imose N."/>
            <person name="Musashino K."/>
            <person name="Yuuki H."/>
            <person name="Oshima A."/>
            <person name="Sasaki N."/>
            <person name="Aotsuka S."/>
            <person name="Yoshikawa Y."/>
            <person name="Matsunawa H."/>
            <person name="Ichihara T."/>
            <person name="Shiohata N."/>
            <person name="Sano S."/>
            <person name="Moriya S."/>
            <person name="Momiyama H."/>
            <person name="Satoh N."/>
            <person name="Takami S."/>
            <person name="Terashima Y."/>
            <person name="Suzuki O."/>
            <person name="Nakagawa S."/>
            <person name="Senoh A."/>
            <person name="Mizoguchi H."/>
            <person name="Goto Y."/>
            <person name="Shimizu F."/>
            <person name="Wakebe H."/>
            <person name="Hishigaki H."/>
            <person name="Watanabe T."/>
            <person name="Sugiyama A."/>
            <person name="Takemoto M."/>
            <person name="Kawakami B."/>
            <person name="Yamazaki M."/>
            <person name="Watanabe K."/>
            <person name="Kumagai A."/>
            <person name="Itakura S."/>
            <person name="Fukuzumi Y."/>
            <person name="Fujimori Y."/>
            <person name="Komiyama M."/>
            <person name="Tashiro H."/>
            <person name="Tanigami A."/>
            <person name="Fujiwara T."/>
            <person name="Ono T."/>
            <person name="Yamada K."/>
            <person name="Fujii Y."/>
            <person name="Ozaki K."/>
            <person name="Hirao M."/>
            <person name="Ohmori Y."/>
            <person name="Kawabata A."/>
            <person name="Hikiji T."/>
            <person name="Kobatake N."/>
            <person name="Inagaki H."/>
            <person name="Ikema Y."/>
            <person name="Okamoto S."/>
            <person name="Okitani R."/>
            <person name="Kawakami T."/>
            <person name="Noguchi S."/>
            <person name="Itoh T."/>
            <person name="Shigeta K."/>
            <person name="Senba T."/>
            <person name="Matsumura K."/>
            <person name="Nakajima Y."/>
            <person name="Mizuno T."/>
            <person name="Morinaga M."/>
            <person name="Sasaki M."/>
            <person name="Togashi T."/>
            <person name="Oyama M."/>
            <person name="Hata H."/>
            <person name="Watanabe M."/>
            <person name="Komatsu T."/>
            <person name="Mizushima-Sugano J."/>
            <person name="Satoh T."/>
            <person name="Shirai Y."/>
            <person name="Takahashi Y."/>
            <person name="Nakagawa K."/>
            <person name="Okumura K."/>
            <person name="Nagase T."/>
            <person name="Nomura N."/>
            <person name="Kikuchi H."/>
            <person name="Masuho Y."/>
            <person name="Yamashita R."/>
            <person name="Nakai K."/>
            <person name="Yada T."/>
            <person name="Nakamura Y."/>
            <person name="Ohara O."/>
            <person name="Isogai T."/>
            <person name="Sugano S."/>
        </authorList>
    </citation>
    <scope>NUCLEOTIDE SEQUENCE [LARGE SCALE MRNA] (ISOFORMS 1 AND 2)</scope>
    <source>
        <tissue>Skeletal muscle</tissue>
        <tissue>Testis</tissue>
    </source>
</reference>
<reference key="4">
    <citation type="submission" date="2005-04" db="EMBL/GenBank/DDBJ databases">
        <authorList>
            <person name="Totoki Y."/>
            <person name="Toyoda A."/>
            <person name="Takeda T."/>
            <person name="Sakaki Y."/>
            <person name="Tanaka A."/>
            <person name="Yokoyama S."/>
        </authorList>
    </citation>
    <scope>NUCLEOTIDE SEQUENCE [LARGE SCALE MRNA] (ISOFORM 2)</scope>
    <source>
        <tissue>Cerebellum</tissue>
    </source>
</reference>
<reference key="5">
    <citation type="journal article" date="2004" name="Nature">
        <title>The sequence and analysis of duplication-rich human chromosome 16.</title>
        <authorList>
            <person name="Martin J."/>
            <person name="Han C."/>
            <person name="Gordon L.A."/>
            <person name="Terry A."/>
            <person name="Prabhakar S."/>
            <person name="She X."/>
            <person name="Xie G."/>
            <person name="Hellsten U."/>
            <person name="Chan Y.M."/>
            <person name="Altherr M."/>
            <person name="Couronne O."/>
            <person name="Aerts A."/>
            <person name="Bajorek E."/>
            <person name="Black S."/>
            <person name="Blumer H."/>
            <person name="Branscomb E."/>
            <person name="Brown N.C."/>
            <person name="Bruno W.J."/>
            <person name="Buckingham J.M."/>
            <person name="Callen D.F."/>
            <person name="Campbell C.S."/>
            <person name="Campbell M.L."/>
            <person name="Campbell E.W."/>
            <person name="Caoile C."/>
            <person name="Challacombe J.F."/>
            <person name="Chasteen L.A."/>
            <person name="Chertkov O."/>
            <person name="Chi H.C."/>
            <person name="Christensen M."/>
            <person name="Clark L.M."/>
            <person name="Cohn J.D."/>
            <person name="Denys M."/>
            <person name="Detter J.C."/>
            <person name="Dickson M."/>
            <person name="Dimitrijevic-Bussod M."/>
            <person name="Escobar J."/>
            <person name="Fawcett J.J."/>
            <person name="Flowers D."/>
            <person name="Fotopulos D."/>
            <person name="Glavina T."/>
            <person name="Gomez M."/>
            <person name="Gonzales E."/>
            <person name="Goodstein D."/>
            <person name="Goodwin L.A."/>
            <person name="Grady D.L."/>
            <person name="Grigoriev I."/>
            <person name="Groza M."/>
            <person name="Hammon N."/>
            <person name="Hawkins T."/>
            <person name="Haydu L."/>
            <person name="Hildebrand C.E."/>
            <person name="Huang W."/>
            <person name="Israni S."/>
            <person name="Jett J."/>
            <person name="Jewett P.B."/>
            <person name="Kadner K."/>
            <person name="Kimball H."/>
            <person name="Kobayashi A."/>
            <person name="Krawczyk M.-C."/>
            <person name="Leyba T."/>
            <person name="Longmire J.L."/>
            <person name="Lopez F."/>
            <person name="Lou Y."/>
            <person name="Lowry S."/>
            <person name="Ludeman T."/>
            <person name="Manohar C.F."/>
            <person name="Mark G.A."/>
            <person name="McMurray K.L."/>
            <person name="Meincke L.J."/>
            <person name="Morgan J."/>
            <person name="Moyzis R.K."/>
            <person name="Mundt M.O."/>
            <person name="Munk A.C."/>
            <person name="Nandkeshwar R.D."/>
            <person name="Pitluck S."/>
            <person name="Pollard M."/>
            <person name="Predki P."/>
            <person name="Parson-Quintana B."/>
            <person name="Ramirez L."/>
            <person name="Rash S."/>
            <person name="Retterer J."/>
            <person name="Ricke D.O."/>
            <person name="Robinson D.L."/>
            <person name="Rodriguez A."/>
            <person name="Salamov A."/>
            <person name="Saunders E.H."/>
            <person name="Scott D."/>
            <person name="Shough T."/>
            <person name="Stallings R.L."/>
            <person name="Stalvey M."/>
            <person name="Sutherland R.D."/>
            <person name="Tapia R."/>
            <person name="Tesmer J.G."/>
            <person name="Thayer N."/>
            <person name="Thompson L.S."/>
            <person name="Tice H."/>
            <person name="Torney D.C."/>
            <person name="Tran-Gyamfi M."/>
            <person name="Tsai M."/>
            <person name="Ulanovsky L.E."/>
            <person name="Ustaszewska A."/>
            <person name="Vo N."/>
            <person name="White P.S."/>
            <person name="Williams A.L."/>
            <person name="Wills P.L."/>
            <person name="Wu J.-R."/>
            <person name="Wu K."/>
            <person name="Yang J."/>
            <person name="DeJong P."/>
            <person name="Bruce D."/>
            <person name="Doggett N.A."/>
            <person name="Deaven L."/>
            <person name="Schmutz J."/>
            <person name="Grimwood J."/>
            <person name="Richardson P."/>
            <person name="Rokhsar D.S."/>
            <person name="Eichler E.E."/>
            <person name="Gilna P."/>
            <person name="Lucas S.M."/>
            <person name="Myers R.M."/>
            <person name="Rubin E.M."/>
            <person name="Pennacchio L.A."/>
        </authorList>
    </citation>
    <scope>NUCLEOTIDE SEQUENCE [LARGE SCALE GENOMIC DNA]</scope>
</reference>
<reference key="6">
    <citation type="journal article" date="2004" name="Genome Res.">
        <title>The status, quality, and expansion of the NIH full-length cDNA project: the Mammalian Gene Collection (MGC).</title>
        <authorList>
            <consortium name="The MGC Project Team"/>
        </authorList>
    </citation>
    <scope>NUCLEOTIDE SEQUENCE [LARGE SCALE MRNA] (ISOFORMS 1 AND 2)</scope>
    <source>
        <tissue>Lung</tissue>
        <tissue>Placenta</tissue>
    </source>
</reference>
<reference key="7">
    <citation type="journal article" date="2007" name="BMC Genomics">
        <title>The full-ORF clone resource of the German cDNA consortium.</title>
        <authorList>
            <person name="Bechtel S."/>
            <person name="Rosenfelder H."/>
            <person name="Duda A."/>
            <person name="Schmidt C.P."/>
            <person name="Ernst U."/>
            <person name="Wellenreuther R."/>
            <person name="Mehrle A."/>
            <person name="Schuster C."/>
            <person name="Bahr A."/>
            <person name="Bloecker H."/>
            <person name="Heubner D."/>
            <person name="Hoerlein A."/>
            <person name="Michel G."/>
            <person name="Wedler H."/>
            <person name="Koehrer K."/>
            <person name="Ottenwaelder B."/>
            <person name="Poustka A."/>
            <person name="Wiemann S."/>
            <person name="Schupp I."/>
        </authorList>
    </citation>
    <scope>NUCLEOTIDE SEQUENCE [LARGE SCALE MRNA] OF 14-334 (ISOFORM 1)</scope>
    <source>
        <tissue>Testis</tissue>
    </source>
</reference>
<reference key="8">
    <citation type="journal article" date="2011" name="BMC Syst. Biol.">
        <title>Initial characterization of the human central proteome.</title>
        <authorList>
            <person name="Burkard T.R."/>
            <person name="Planyavsky M."/>
            <person name="Kaupe I."/>
            <person name="Breitwieser F.P."/>
            <person name="Buerckstuemmer T."/>
            <person name="Bennett K.L."/>
            <person name="Superti-Furga G."/>
            <person name="Colinge J."/>
        </authorList>
    </citation>
    <scope>IDENTIFICATION BY MASS SPECTROMETRY [LARGE SCALE ANALYSIS]</scope>
</reference>
<reference key="9">
    <citation type="journal article" date="2011" name="Acta Crystallogr. D">
        <title>The structure of human leucine carboxyl methyltransferase 1 that regulates protein phosphatase PP2A.</title>
        <authorList>
            <person name="Tsai M.L."/>
            <person name="Cronin N."/>
            <person name="Djordjevic S."/>
        </authorList>
    </citation>
    <scope>X-RAY CRYSTALLOGRAPHY (2.0 ANGSTROMS) OF 23-334 IN COMPLEX WITH S-ADENOSYL-L-METHIONINE</scope>
    <scope>CATALYTIC ACTIVITY</scope>
</reference>
<reference key="10">
    <citation type="journal article" date="2011" name="Mol. Cell">
        <title>The structural basis for tight control of PP2A methylation and function by LCMT-1.</title>
        <authorList>
            <person name="Stanevich V."/>
            <person name="Jiang L."/>
            <person name="Satyshur K.A."/>
            <person name="Li Y."/>
            <person name="Jeffrey P.D."/>
            <person name="Li Z."/>
            <person name="Menden P."/>
            <person name="Semmelhack M.F."/>
            <person name="Xing Y."/>
        </authorList>
    </citation>
    <scope>X-RAY CRYSTALLOGRAPHY (1.9 ANGSTROMS) ALONE AND IN COMPLEX WITH PPP2CA</scope>
</reference>
<gene>
    <name type="primary">LCMT1</name>
    <name type="synonym">LCMT</name>
    <name type="ORF">CGI-68</name>
</gene>
<protein>
    <recommendedName>
        <fullName>Leucine carboxyl methyltransferase 1</fullName>
        <ecNumber evidence="1 2">2.1.1.233</ecNumber>
    </recommendedName>
    <alternativeName>
        <fullName>Protein-leucine O-methyltransferase</fullName>
    </alternativeName>
    <alternativeName>
        <fullName>[Phosphatase 2A protein]-leucine-carboxy methyltransferase 1</fullName>
    </alternativeName>
</protein>